<evidence type="ECO:0000255" key="1"/>
<evidence type="ECO:0000269" key="2">
    <source>
    </source>
</evidence>
<evidence type="ECO:0000305" key="3"/>
<evidence type="ECO:0000305" key="4">
    <source>
    </source>
</evidence>
<feature type="signal peptide" evidence="1">
    <location>
        <begin position="1"/>
        <end position="28"/>
    </location>
</feature>
<feature type="chain" id="PRO_0000013782" description="Uncharacterized fimbrial-like protein YadL">
    <location>
        <begin position="29"/>
        <end position="201"/>
    </location>
</feature>
<organism>
    <name type="scientific">Escherichia coli (strain K12)</name>
    <dbReference type="NCBI Taxonomy" id="83333"/>
    <lineage>
        <taxon>Bacteria</taxon>
        <taxon>Pseudomonadati</taxon>
        <taxon>Pseudomonadota</taxon>
        <taxon>Gammaproteobacteria</taxon>
        <taxon>Enterobacterales</taxon>
        <taxon>Enterobacteriaceae</taxon>
        <taxon>Escherichia</taxon>
    </lineage>
</organism>
<accession>P37017</accession>
<proteinExistence type="evidence at transcript level"/>
<sequence length="201" mass="21047">MMTFKNLRYGLSSSVVLAASLFSVLSYAATDSIGLTVITTVEMGTCTATLVNDSDQDISVVDFGDVYISEINAKTKVKTFKLKFKDCAGIPNKKAQIKLTKRATCEGTANDGAGFANGSTAADKASAVAVEVWSTVTPATGSATQFSCVTPASQEVTISTAANAVVYYPMSARLVVEKNKTVNNVTAGKFSAPATFTVTYN</sequence>
<protein>
    <recommendedName>
        <fullName>Uncharacterized fimbrial-like protein YadL</fullName>
    </recommendedName>
</protein>
<comment type="function">
    <text evidence="2">Part of the yadCKLM-htrE-yadVN fimbrial operon. Could contribute to adhesion to various surfaces in specific environmental niches.</text>
</comment>
<comment type="subcellular location">
    <subcellularLocation>
        <location evidence="3">Fimbrium</location>
    </subcellularLocation>
</comment>
<comment type="induction">
    <text evidence="2">Repressed by H-NS.</text>
</comment>
<comment type="disruption phenotype">
    <text evidence="2">Deletion of the operon under classical laboratory conditions does not result in any major effect on E.coli capacity to form biofilms compared with the wild-type strain.</text>
</comment>
<comment type="miscellaneous">
    <text evidence="4">The operon is cryptic under classical laboratory conditions, but is functional when constitutively expressed.</text>
</comment>
<comment type="similarity">
    <text evidence="3">Belongs to the fimbrial protein family.</text>
</comment>
<dbReference type="EMBL" id="U00096">
    <property type="protein sequence ID" value="AAC73248.1"/>
    <property type="molecule type" value="Genomic_DNA"/>
</dbReference>
<dbReference type="EMBL" id="AP009048">
    <property type="protein sequence ID" value="BAB96714.1"/>
    <property type="molecule type" value="Genomic_DNA"/>
</dbReference>
<dbReference type="PIR" id="A64737">
    <property type="entry name" value="A64737"/>
</dbReference>
<dbReference type="RefSeq" id="NP_414679.1">
    <property type="nucleotide sequence ID" value="NC_000913.3"/>
</dbReference>
<dbReference type="RefSeq" id="WP_001310526.1">
    <property type="nucleotide sequence ID" value="NZ_STEB01000010.1"/>
</dbReference>
<dbReference type="SMR" id="P37017"/>
<dbReference type="BioGRID" id="4259740">
    <property type="interactions" value="13"/>
</dbReference>
<dbReference type="FunCoup" id="P37017">
    <property type="interactions" value="23"/>
</dbReference>
<dbReference type="STRING" id="511145.b0137"/>
<dbReference type="PaxDb" id="511145-b0137"/>
<dbReference type="EnsemblBacteria" id="AAC73248">
    <property type="protein sequence ID" value="AAC73248"/>
    <property type="gene ID" value="b0137"/>
</dbReference>
<dbReference type="GeneID" id="944829"/>
<dbReference type="KEGG" id="ecj:JW0133"/>
<dbReference type="KEGG" id="eco:b0137"/>
<dbReference type="PATRIC" id="fig|1411691.4.peg.2144"/>
<dbReference type="EchoBASE" id="EB2230"/>
<dbReference type="eggNOG" id="COG3539">
    <property type="taxonomic scope" value="Bacteria"/>
</dbReference>
<dbReference type="HOGENOM" id="CLU_116193_1_0_6"/>
<dbReference type="InParanoid" id="P37017"/>
<dbReference type="OMA" id="MNARMVI"/>
<dbReference type="OrthoDB" id="6573132at2"/>
<dbReference type="BioCyc" id="EcoCyc:EG12326-MONOMER"/>
<dbReference type="PRO" id="PR:P37017"/>
<dbReference type="Proteomes" id="UP000000625">
    <property type="component" value="Chromosome"/>
</dbReference>
<dbReference type="GO" id="GO:0009289">
    <property type="term" value="C:pilus"/>
    <property type="evidence" value="ECO:0000318"/>
    <property type="project" value="GO_Central"/>
</dbReference>
<dbReference type="GO" id="GO:0043709">
    <property type="term" value="P:cell adhesion involved in single-species biofilm formation"/>
    <property type="evidence" value="ECO:0000318"/>
    <property type="project" value="GO_Central"/>
</dbReference>
<dbReference type="Gene3D" id="2.60.40.1090">
    <property type="entry name" value="Fimbrial-type adhesion domain"/>
    <property type="match status" value="1"/>
</dbReference>
<dbReference type="InterPro" id="IPR000259">
    <property type="entry name" value="Adhesion_dom_fimbrial"/>
</dbReference>
<dbReference type="InterPro" id="IPR036937">
    <property type="entry name" value="Adhesion_dom_fimbrial_sf"/>
</dbReference>
<dbReference type="InterPro" id="IPR008966">
    <property type="entry name" value="Adhesion_dom_sf"/>
</dbReference>
<dbReference type="InterPro" id="IPR050263">
    <property type="entry name" value="Bact_Fimbrial_Adh_Pro"/>
</dbReference>
<dbReference type="NCBIfam" id="NF011795">
    <property type="entry name" value="PRK15263.1-1"/>
    <property type="match status" value="1"/>
</dbReference>
<dbReference type="NCBIfam" id="NF011797">
    <property type="entry name" value="PRK15263.1-3"/>
    <property type="match status" value="1"/>
</dbReference>
<dbReference type="PANTHER" id="PTHR33420">
    <property type="entry name" value="FIMBRIAL SUBUNIT ELFA-RELATED"/>
    <property type="match status" value="1"/>
</dbReference>
<dbReference type="PANTHER" id="PTHR33420:SF12">
    <property type="entry name" value="FIMBRIN-LIKE PROTEIN FIMI-RELATED"/>
    <property type="match status" value="1"/>
</dbReference>
<dbReference type="Pfam" id="PF00419">
    <property type="entry name" value="Fimbrial"/>
    <property type="match status" value="1"/>
</dbReference>
<dbReference type="SUPFAM" id="SSF49401">
    <property type="entry name" value="Bacterial adhesins"/>
    <property type="match status" value="1"/>
</dbReference>
<name>YADL_ECOLI</name>
<keyword id="KW-0281">Fimbrium</keyword>
<keyword id="KW-1185">Reference proteome</keyword>
<keyword id="KW-0732">Signal</keyword>
<reference key="1">
    <citation type="journal article" date="1994" name="Nucleic Acids Res.">
        <title>Systematic sequencing of the Escherichia coli genome: analysis of the 2.4-4.1 min (110,917-193,643 bp) region.</title>
        <authorList>
            <person name="Fujita N."/>
            <person name="Mori H."/>
            <person name="Yura T."/>
            <person name="Ishihama A."/>
        </authorList>
    </citation>
    <scope>NUCLEOTIDE SEQUENCE [LARGE SCALE GENOMIC DNA]</scope>
    <source>
        <strain>K12 / W3110 / ATCC 27325 / DSM 5911</strain>
    </source>
</reference>
<reference key="2">
    <citation type="journal article" date="1997" name="Science">
        <title>The complete genome sequence of Escherichia coli K-12.</title>
        <authorList>
            <person name="Blattner F.R."/>
            <person name="Plunkett G. III"/>
            <person name="Bloch C.A."/>
            <person name="Perna N.T."/>
            <person name="Burland V."/>
            <person name="Riley M."/>
            <person name="Collado-Vides J."/>
            <person name="Glasner J.D."/>
            <person name="Rode C.K."/>
            <person name="Mayhew G.F."/>
            <person name="Gregor J."/>
            <person name="Davis N.W."/>
            <person name="Kirkpatrick H.A."/>
            <person name="Goeden M.A."/>
            <person name="Rose D.J."/>
            <person name="Mau B."/>
            <person name="Shao Y."/>
        </authorList>
    </citation>
    <scope>NUCLEOTIDE SEQUENCE [LARGE SCALE GENOMIC DNA]</scope>
    <source>
        <strain>K12 / MG1655 / ATCC 47076</strain>
    </source>
</reference>
<reference key="3">
    <citation type="journal article" date="2006" name="Mol. Syst. Biol.">
        <title>Highly accurate genome sequences of Escherichia coli K-12 strains MG1655 and W3110.</title>
        <authorList>
            <person name="Hayashi K."/>
            <person name="Morooka N."/>
            <person name="Yamamoto Y."/>
            <person name="Fujita K."/>
            <person name="Isono K."/>
            <person name="Choi S."/>
            <person name="Ohtsubo E."/>
            <person name="Baba T."/>
            <person name="Wanner B.L."/>
            <person name="Mori H."/>
            <person name="Horiuchi T."/>
        </authorList>
    </citation>
    <scope>NUCLEOTIDE SEQUENCE [LARGE SCALE GENOMIC DNA]</scope>
    <source>
        <strain>K12 / W3110 / ATCC 27325 / DSM 5911</strain>
    </source>
</reference>
<reference key="4">
    <citation type="journal article" date="2010" name="Environ. Microbiol.">
        <title>Escherichia coli K-12 possesses multiple cryptic but functional chaperone-usher fimbriae with distinct surface specificities.</title>
        <authorList>
            <person name="Korea C.G."/>
            <person name="Badouraly R."/>
            <person name="Prevost M.C."/>
            <person name="Ghigo J.M."/>
            <person name="Beloin C."/>
        </authorList>
    </citation>
    <scope>FUNCTION</scope>
    <scope>INDUCTION</scope>
    <scope>DISRUPTION PHENOTYPE</scope>
    <source>
        <strain>K12 / MG1655 / ATCC 47076</strain>
    </source>
</reference>
<gene>
    <name type="primary">yadL</name>
    <name type="ordered locus">b0137</name>
    <name type="ordered locus">JW0133</name>
</gene>